<sequence length="141" mass="16082">MMPLVPLLLVSIVFPGIQATQLTRCELTEKLKELDGYRDISMSEWICTLFHTSGLDTKITVNNNGSTEYGIFQISDKLWCVSKQNPQSKNICDTPCENFLDDNLTDDVKCAMKILDKEGIDHWLAHKPLCSENLEQWVCKK</sequence>
<feature type="signal peptide" evidence="3">
    <location>
        <begin position="1"/>
        <end position="19"/>
    </location>
</feature>
<feature type="chain" id="PRO_0000018448" description="Alpha-lactalbumin">
    <location>
        <begin position="20"/>
        <end position="141"/>
    </location>
</feature>
<feature type="domain" description="C-type lysozyme" evidence="2">
    <location>
        <begin position="20"/>
        <end position="141"/>
    </location>
</feature>
<feature type="binding site" evidence="1">
    <location>
        <position position="101"/>
    </location>
    <ligand>
        <name>Ca(2+)</name>
        <dbReference type="ChEBI" id="CHEBI:29108"/>
    </ligand>
</feature>
<feature type="binding site" evidence="1">
    <location>
        <position position="106"/>
    </location>
    <ligand>
        <name>Ca(2+)</name>
        <dbReference type="ChEBI" id="CHEBI:29108"/>
    </ligand>
</feature>
<feature type="binding site" evidence="1">
    <location>
        <position position="107"/>
    </location>
    <ligand>
        <name>Ca(2+)</name>
        <dbReference type="ChEBI" id="CHEBI:29108"/>
    </ligand>
</feature>
<feature type="glycosylation site" description="N-linked (GlcNAc...) asparagine">
    <location>
        <position position="64"/>
    </location>
</feature>
<feature type="disulfide bond" evidence="2">
    <location>
        <begin position="25"/>
        <end position="139"/>
    </location>
</feature>
<feature type="disulfide bond" evidence="2">
    <location>
        <begin position="47"/>
        <end position="130"/>
    </location>
</feature>
<feature type="disulfide bond" evidence="2">
    <location>
        <begin position="80"/>
        <end position="96"/>
    </location>
</feature>
<feature type="disulfide bond" evidence="2">
    <location>
        <begin position="92"/>
        <end position="110"/>
    </location>
</feature>
<feature type="sequence conflict" description="In Ref. 2; AA sequence." evidence="4" ref="2">
    <original>SD</original>
    <variation>NS</variation>
    <location>
        <begin position="75"/>
        <end position="76"/>
    </location>
</feature>
<evidence type="ECO:0000250" key="1">
    <source>
        <dbReference type="UniProtKB" id="P00711"/>
    </source>
</evidence>
<evidence type="ECO:0000255" key="2">
    <source>
        <dbReference type="PROSITE-ProRule" id="PRU00680"/>
    </source>
</evidence>
<evidence type="ECO:0000269" key="3">
    <source>
    </source>
</evidence>
<evidence type="ECO:0000305" key="4"/>
<name>LALBA_RABIT</name>
<dbReference type="EMBL" id="AF124257">
    <property type="protein sequence ID" value="AAD56599.1"/>
    <property type="molecule type" value="mRNA"/>
</dbReference>
<dbReference type="EMBL" id="AF123893">
    <property type="protein sequence ID" value="AAD56598.1"/>
    <property type="molecule type" value="Genomic_DNA"/>
</dbReference>
<dbReference type="RefSeq" id="NP_001075521.1">
    <property type="nucleotide sequence ID" value="NM_001082052.1"/>
</dbReference>
<dbReference type="RefSeq" id="XP_008254616.1">
    <property type="nucleotide sequence ID" value="XM_008256394.3"/>
</dbReference>
<dbReference type="RefSeq" id="XP_017197107.1">
    <property type="nucleotide sequence ID" value="XM_017341618.2"/>
</dbReference>
<dbReference type="RefSeq" id="XP_051700837.1">
    <property type="nucleotide sequence ID" value="XM_051844877.2"/>
</dbReference>
<dbReference type="RefSeq" id="XP_051700838.1">
    <property type="nucleotide sequence ID" value="XM_051844878.2"/>
</dbReference>
<dbReference type="SMR" id="P00716"/>
<dbReference type="FunCoup" id="P00716">
    <property type="interactions" value="2"/>
</dbReference>
<dbReference type="STRING" id="9986.ENSOCUP00000024236"/>
<dbReference type="GlyCosmos" id="P00716">
    <property type="glycosylation" value="1 site, No reported glycans"/>
</dbReference>
<dbReference type="PaxDb" id="9986-ENSOCUP00000013596"/>
<dbReference type="Ensembl" id="ENSOCUT00000023351.1">
    <property type="protein sequence ID" value="ENSOCUP00000024236.1"/>
    <property type="gene ID" value="ENSOCUG00000015834.3"/>
</dbReference>
<dbReference type="GeneID" id="100008717"/>
<dbReference type="KEGG" id="ocu:100008717"/>
<dbReference type="CTD" id="3906"/>
<dbReference type="eggNOG" id="ENOG502T8BJ">
    <property type="taxonomic scope" value="Eukaryota"/>
</dbReference>
<dbReference type="GeneTree" id="ENSGT00940000161726"/>
<dbReference type="HOGENOM" id="CLU_111620_0_1_1"/>
<dbReference type="InParanoid" id="P00716"/>
<dbReference type="OMA" id="PEWICTI"/>
<dbReference type="OrthoDB" id="17373at2759"/>
<dbReference type="Proteomes" id="UP000001811">
    <property type="component" value="Chromosome 4"/>
</dbReference>
<dbReference type="Bgee" id="ENSOCUG00000015834">
    <property type="expression patterns" value="Expressed in testis and 3 other cell types or tissues"/>
</dbReference>
<dbReference type="ExpressionAtlas" id="P00716">
    <property type="expression patterns" value="baseline"/>
</dbReference>
<dbReference type="GO" id="GO:0005576">
    <property type="term" value="C:extracellular region"/>
    <property type="evidence" value="ECO:0007669"/>
    <property type="project" value="UniProtKB-SubCell"/>
</dbReference>
<dbReference type="GO" id="GO:0005509">
    <property type="term" value="F:calcium ion binding"/>
    <property type="evidence" value="ECO:0007669"/>
    <property type="project" value="InterPro"/>
</dbReference>
<dbReference type="GO" id="GO:0004461">
    <property type="term" value="F:lactose synthase activity"/>
    <property type="evidence" value="ECO:0007669"/>
    <property type="project" value="InterPro"/>
</dbReference>
<dbReference type="GO" id="GO:0003796">
    <property type="term" value="F:lysozyme activity"/>
    <property type="evidence" value="ECO:0007669"/>
    <property type="project" value="TreeGrafter"/>
</dbReference>
<dbReference type="GO" id="GO:0050829">
    <property type="term" value="P:defense response to Gram-negative bacterium"/>
    <property type="evidence" value="ECO:0007669"/>
    <property type="project" value="TreeGrafter"/>
</dbReference>
<dbReference type="GO" id="GO:0050830">
    <property type="term" value="P:defense response to Gram-positive bacterium"/>
    <property type="evidence" value="ECO:0007669"/>
    <property type="project" value="TreeGrafter"/>
</dbReference>
<dbReference type="GO" id="GO:0005989">
    <property type="term" value="P:lactose biosynthetic process"/>
    <property type="evidence" value="ECO:0007669"/>
    <property type="project" value="UniProtKB-KW"/>
</dbReference>
<dbReference type="FunFam" id="1.10.530.10:FF:000014">
    <property type="entry name" value="Alpha-lactalbumin"/>
    <property type="match status" value="1"/>
</dbReference>
<dbReference type="Gene3D" id="1.10.530.10">
    <property type="match status" value="1"/>
</dbReference>
<dbReference type="InterPro" id="IPR001916">
    <property type="entry name" value="Glyco_hydro_22"/>
</dbReference>
<dbReference type="InterPro" id="IPR019799">
    <property type="entry name" value="Glyco_hydro_22_CS"/>
</dbReference>
<dbReference type="InterPro" id="IPR000545">
    <property type="entry name" value="Lactalbumin"/>
</dbReference>
<dbReference type="InterPro" id="IPR023346">
    <property type="entry name" value="Lysozyme-like_dom_sf"/>
</dbReference>
<dbReference type="PANTHER" id="PTHR11407:SF32">
    <property type="entry name" value="ALPHA-LACTALBUMIN"/>
    <property type="match status" value="1"/>
</dbReference>
<dbReference type="PANTHER" id="PTHR11407">
    <property type="entry name" value="LYSOZYME C"/>
    <property type="match status" value="1"/>
</dbReference>
<dbReference type="Pfam" id="PF00062">
    <property type="entry name" value="Lys"/>
    <property type="match status" value="1"/>
</dbReference>
<dbReference type="PRINTS" id="PR00136">
    <property type="entry name" value="LACTALBUMIN"/>
</dbReference>
<dbReference type="PRINTS" id="PR00135">
    <property type="entry name" value="LYZLACT"/>
</dbReference>
<dbReference type="SMART" id="SM00263">
    <property type="entry name" value="LYZ1"/>
    <property type="match status" value="1"/>
</dbReference>
<dbReference type="SUPFAM" id="SSF53955">
    <property type="entry name" value="Lysozyme-like"/>
    <property type="match status" value="1"/>
</dbReference>
<dbReference type="PROSITE" id="PS00128">
    <property type="entry name" value="GLYCOSYL_HYDROL_F22_1"/>
    <property type="match status" value="1"/>
</dbReference>
<dbReference type="PROSITE" id="PS51348">
    <property type="entry name" value="GLYCOSYL_HYDROL_F22_2"/>
    <property type="match status" value="1"/>
</dbReference>
<protein>
    <recommendedName>
        <fullName>Alpha-lactalbumin</fullName>
    </recommendedName>
    <alternativeName>
        <fullName>Lactose synthase B protein</fullName>
    </alternativeName>
</protein>
<organism>
    <name type="scientific">Oryctolagus cuniculus</name>
    <name type="common">Rabbit</name>
    <dbReference type="NCBI Taxonomy" id="9986"/>
    <lineage>
        <taxon>Eukaryota</taxon>
        <taxon>Metazoa</taxon>
        <taxon>Chordata</taxon>
        <taxon>Craniata</taxon>
        <taxon>Vertebrata</taxon>
        <taxon>Euteleostomi</taxon>
        <taxon>Mammalia</taxon>
        <taxon>Eutheria</taxon>
        <taxon>Euarchontoglires</taxon>
        <taxon>Glires</taxon>
        <taxon>Lagomorpha</taxon>
        <taxon>Leporidae</taxon>
        <taxon>Oryctolagus</taxon>
    </lineage>
</organism>
<accession>P00716</accession>
<accession>Q9TQT7</accession>
<reference key="1">
    <citation type="submission" date="1999-01" db="EMBL/GenBank/DDBJ databases">
        <title>Cloning of the rabbit alpha-lactalbumin gene and characterization of its promoter in cultured mammary-cells.</title>
        <authorList>
            <person name="Pak K.-W."/>
            <person name="Kim S.J."/>
            <person name="Min W.-K."/>
            <person name="Park I.-Y."/>
            <person name="Huang H."/>
            <person name="Kim S.-W."/>
            <person name="Lee K.-K."/>
        </authorList>
    </citation>
    <scope>NUCLEOTIDE SEQUENCE [GENOMIC DNA / MRNA]</scope>
    <source>
        <strain>New Zealand white</strain>
        <tissue>Mammary gland</tissue>
    </source>
</reference>
<reference key="2">
    <citation type="journal article" date="1979" name="Biochemistry">
        <title>Primary structure of rabbit alpha-lactalbumin.</title>
        <authorList>
            <person name="Hopp T.P."/>
            <person name="Woods K.R."/>
        </authorList>
    </citation>
    <scope>PROTEIN SEQUENCE OF 20-141</scope>
</reference>
<proteinExistence type="evidence at protein level"/>
<gene>
    <name type="primary">LALBA</name>
</gene>
<keyword id="KW-0106">Calcium</keyword>
<keyword id="KW-0903">Direct protein sequencing</keyword>
<keyword id="KW-1015">Disulfide bond</keyword>
<keyword id="KW-0325">Glycoprotein</keyword>
<keyword id="KW-0422">Lactose biosynthesis</keyword>
<keyword id="KW-0479">Metal-binding</keyword>
<keyword id="KW-0494">Milk protein</keyword>
<keyword id="KW-1185">Reference proteome</keyword>
<keyword id="KW-0964">Secreted</keyword>
<keyword id="KW-0732">Signal</keyword>
<comment type="function">
    <text>Regulatory subunit of lactose synthase, changes the substrate specificity of galactosyltransferase in the mammary gland making glucose a good acceptor substrate for this enzyme. This enables LS to synthesize lactose, the major carbohydrate component of milk. In other tissues, galactosyltransferase transfers galactose onto the N-acetylglucosamine of the oligosaccharide chains in glycoproteins.</text>
</comment>
<comment type="subunit">
    <text>Lactose synthase (LS) is a heterodimer of a catalytic component, beta1,4-galactosyltransferase (beta4Gal-T1) and a regulatory component, alpha-lactalbumin (LA).</text>
</comment>
<comment type="subcellular location">
    <subcellularLocation>
        <location>Secreted</location>
    </subcellularLocation>
</comment>
<comment type="tissue specificity">
    <text>Mammary gland specific. Secreted in milk.</text>
</comment>
<comment type="similarity">
    <text evidence="2">Belongs to the glycosyl hydrolase 22 family.</text>
</comment>